<name>HSLU_WIGBR</name>
<comment type="function">
    <text evidence="1">ATPase subunit of a proteasome-like degradation complex; this subunit has chaperone activity. The binding of ATP and its subsequent hydrolysis by HslU are essential for unfolding of protein substrates subsequently hydrolyzed by HslV. HslU recognizes the N-terminal part of its protein substrates and unfolds these before they are guided to HslV for hydrolysis.</text>
</comment>
<comment type="subunit">
    <text evidence="1">A double ring-shaped homohexamer of HslV is capped on each side by a ring-shaped HslU homohexamer. The assembly of the HslU/HslV complex is dependent on binding of ATP.</text>
</comment>
<comment type="subcellular location">
    <subcellularLocation>
        <location evidence="1">Cytoplasm</location>
    </subcellularLocation>
</comment>
<comment type="similarity">
    <text evidence="1">Belongs to the ClpX chaperone family. HslU subfamily.</text>
</comment>
<comment type="sequence caution" evidence="2">
    <conflict type="erroneous initiation">
        <sequence resource="EMBL-CDS" id="BAC24423"/>
    </conflict>
</comment>
<proteinExistence type="inferred from homology"/>
<dbReference type="EMBL" id="BA000021">
    <property type="protein sequence ID" value="BAC24423.1"/>
    <property type="status" value="ALT_INIT"/>
    <property type="molecule type" value="Genomic_DNA"/>
</dbReference>
<dbReference type="SMR" id="Q8D2S7"/>
<dbReference type="STRING" id="36870.gene:10368770"/>
<dbReference type="KEGG" id="wbr:hslU"/>
<dbReference type="eggNOG" id="COG1220">
    <property type="taxonomic scope" value="Bacteria"/>
</dbReference>
<dbReference type="HOGENOM" id="CLU_033123_0_0_6"/>
<dbReference type="OrthoDB" id="9804062at2"/>
<dbReference type="Proteomes" id="UP000000562">
    <property type="component" value="Chromosome"/>
</dbReference>
<dbReference type="GO" id="GO:0009376">
    <property type="term" value="C:HslUV protease complex"/>
    <property type="evidence" value="ECO:0007669"/>
    <property type="project" value="UniProtKB-UniRule"/>
</dbReference>
<dbReference type="GO" id="GO:0005524">
    <property type="term" value="F:ATP binding"/>
    <property type="evidence" value="ECO:0007669"/>
    <property type="project" value="UniProtKB-UniRule"/>
</dbReference>
<dbReference type="GO" id="GO:0016887">
    <property type="term" value="F:ATP hydrolysis activity"/>
    <property type="evidence" value="ECO:0007669"/>
    <property type="project" value="InterPro"/>
</dbReference>
<dbReference type="GO" id="GO:0008233">
    <property type="term" value="F:peptidase activity"/>
    <property type="evidence" value="ECO:0007669"/>
    <property type="project" value="InterPro"/>
</dbReference>
<dbReference type="GO" id="GO:0036402">
    <property type="term" value="F:proteasome-activating activity"/>
    <property type="evidence" value="ECO:0007669"/>
    <property type="project" value="UniProtKB-UniRule"/>
</dbReference>
<dbReference type="GO" id="GO:0043335">
    <property type="term" value="P:protein unfolding"/>
    <property type="evidence" value="ECO:0007669"/>
    <property type="project" value="UniProtKB-UniRule"/>
</dbReference>
<dbReference type="GO" id="GO:0051603">
    <property type="term" value="P:proteolysis involved in protein catabolic process"/>
    <property type="evidence" value="ECO:0007669"/>
    <property type="project" value="TreeGrafter"/>
</dbReference>
<dbReference type="CDD" id="cd19498">
    <property type="entry name" value="RecA-like_HslU"/>
    <property type="match status" value="1"/>
</dbReference>
<dbReference type="FunFam" id="1.10.8.10:FF:000028">
    <property type="entry name" value="ATP-dependent protease ATPase subunit HslU"/>
    <property type="match status" value="1"/>
</dbReference>
<dbReference type="FunFam" id="1.10.8.60:FF:000027">
    <property type="entry name" value="ATP-dependent protease ATPase subunit HslU"/>
    <property type="match status" value="1"/>
</dbReference>
<dbReference type="FunFam" id="3.40.50.300:FF:000213">
    <property type="entry name" value="ATP-dependent protease ATPase subunit HslU"/>
    <property type="match status" value="1"/>
</dbReference>
<dbReference type="FunFam" id="3.40.50.300:FF:000220">
    <property type="entry name" value="ATP-dependent protease ATPase subunit HslU"/>
    <property type="match status" value="1"/>
</dbReference>
<dbReference type="Gene3D" id="1.10.8.60">
    <property type="match status" value="1"/>
</dbReference>
<dbReference type="Gene3D" id="1.10.8.10">
    <property type="entry name" value="DNA helicase RuvA subunit, C-terminal domain"/>
    <property type="match status" value="2"/>
</dbReference>
<dbReference type="Gene3D" id="3.40.50.300">
    <property type="entry name" value="P-loop containing nucleotide triphosphate hydrolases"/>
    <property type="match status" value="1"/>
</dbReference>
<dbReference type="HAMAP" id="MF_00249">
    <property type="entry name" value="HslU"/>
    <property type="match status" value="1"/>
</dbReference>
<dbReference type="InterPro" id="IPR003593">
    <property type="entry name" value="AAA+_ATPase"/>
</dbReference>
<dbReference type="InterPro" id="IPR050052">
    <property type="entry name" value="ATP-dep_Clp_protease_ClpX"/>
</dbReference>
<dbReference type="InterPro" id="IPR003959">
    <property type="entry name" value="ATPase_AAA_core"/>
</dbReference>
<dbReference type="InterPro" id="IPR019489">
    <property type="entry name" value="Clp_ATPase_C"/>
</dbReference>
<dbReference type="InterPro" id="IPR004491">
    <property type="entry name" value="HslU"/>
</dbReference>
<dbReference type="InterPro" id="IPR027417">
    <property type="entry name" value="P-loop_NTPase"/>
</dbReference>
<dbReference type="NCBIfam" id="TIGR00390">
    <property type="entry name" value="hslU"/>
    <property type="match status" value="1"/>
</dbReference>
<dbReference type="NCBIfam" id="NF003544">
    <property type="entry name" value="PRK05201.1"/>
    <property type="match status" value="1"/>
</dbReference>
<dbReference type="PANTHER" id="PTHR48102">
    <property type="entry name" value="ATP-DEPENDENT CLP PROTEASE ATP-BINDING SUBUNIT CLPX-LIKE, MITOCHONDRIAL-RELATED"/>
    <property type="match status" value="1"/>
</dbReference>
<dbReference type="PANTHER" id="PTHR48102:SF3">
    <property type="entry name" value="ATP-DEPENDENT PROTEASE ATPASE SUBUNIT HSLU"/>
    <property type="match status" value="1"/>
</dbReference>
<dbReference type="Pfam" id="PF00004">
    <property type="entry name" value="AAA"/>
    <property type="match status" value="1"/>
</dbReference>
<dbReference type="Pfam" id="PF07724">
    <property type="entry name" value="AAA_2"/>
    <property type="match status" value="1"/>
</dbReference>
<dbReference type="SMART" id="SM00382">
    <property type="entry name" value="AAA"/>
    <property type="match status" value="1"/>
</dbReference>
<dbReference type="SMART" id="SM01086">
    <property type="entry name" value="ClpB_D2-small"/>
    <property type="match status" value="1"/>
</dbReference>
<dbReference type="SUPFAM" id="SSF52540">
    <property type="entry name" value="P-loop containing nucleoside triphosphate hydrolases"/>
    <property type="match status" value="1"/>
</dbReference>
<feature type="chain" id="PRO_0000160562" description="ATP-dependent protease ATPase subunit HslU">
    <location>
        <begin position="1"/>
        <end position="443"/>
    </location>
</feature>
<feature type="binding site" evidence="1">
    <location>
        <position position="18"/>
    </location>
    <ligand>
        <name>ATP</name>
        <dbReference type="ChEBI" id="CHEBI:30616"/>
    </ligand>
</feature>
<feature type="binding site" evidence="1">
    <location>
        <begin position="60"/>
        <end position="65"/>
    </location>
    <ligand>
        <name>ATP</name>
        <dbReference type="ChEBI" id="CHEBI:30616"/>
    </ligand>
</feature>
<feature type="binding site" evidence="1">
    <location>
        <position position="256"/>
    </location>
    <ligand>
        <name>ATP</name>
        <dbReference type="ChEBI" id="CHEBI:30616"/>
    </ligand>
</feature>
<feature type="binding site" evidence="1">
    <location>
        <position position="321"/>
    </location>
    <ligand>
        <name>ATP</name>
        <dbReference type="ChEBI" id="CHEBI:30616"/>
    </ligand>
</feature>
<feature type="binding site" evidence="1">
    <location>
        <position position="393"/>
    </location>
    <ligand>
        <name>ATP</name>
        <dbReference type="ChEBI" id="CHEBI:30616"/>
    </ligand>
</feature>
<organism>
    <name type="scientific">Wigglesworthia glossinidia brevipalpis</name>
    <dbReference type="NCBI Taxonomy" id="36870"/>
    <lineage>
        <taxon>Bacteria</taxon>
        <taxon>Pseudomonadati</taxon>
        <taxon>Pseudomonadota</taxon>
        <taxon>Gammaproteobacteria</taxon>
        <taxon>Enterobacterales</taxon>
        <taxon>Erwiniaceae</taxon>
        <taxon>Wigglesworthia</taxon>
    </lineage>
</organism>
<reference key="1">
    <citation type="journal article" date="2002" name="Nat. Genet.">
        <title>Genome sequence of the endocellular obligate symbiont of tsetse flies, Wigglesworthia glossinidia.</title>
        <authorList>
            <person name="Akman L."/>
            <person name="Yamashita A."/>
            <person name="Watanabe H."/>
            <person name="Oshima K."/>
            <person name="Shiba T."/>
            <person name="Hattori M."/>
            <person name="Aksoy S."/>
        </authorList>
    </citation>
    <scope>NUCLEOTIDE SEQUENCE [LARGE SCALE GENOMIC DNA]</scope>
</reference>
<gene>
    <name evidence="1" type="primary">hslU</name>
    <name type="ordered locus">WIGBR2770</name>
</gene>
<sequence length="443" mass="49804">MSNMTPKNIVKELDSHIIGQHDAKKAVAIALRNRWRRMKLDDSLRHEVTPKNILMIGPTGVGKTEIARRLAKLAKAPFIKVEATKFTEVGYVGKEVDSIIRDLTDASVKMIRLQSIEKNRFRAEELAEERVLDVLIPSVKNDWGNSENKKEPSKTRQNFRKKLKTKELDDKEIEINLASTPIGVEIMAPPGMEEMTSQLQSMFKNLAGQKQKPRKIKIKEAMRLLIEEESAKLINLEEIKEKAVEAVEQNGIVFIDEIDKICKRGEISGPDVSREGVQRDLLPLVEGCTVSTKHGMVKTDHILFIASGAFQVANPSDLIPELQGRLPIRVELSALTIEDFEKILTEPSASLTKQYSALMATEGVIISFTQEGIKKIAEAACQVNDSTENIGARRLHTILERLMEEVSYNASEWNGKKINIDADYVSNHLDKLVSDEDLSRFIL</sequence>
<keyword id="KW-0067">ATP-binding</keyword>
<keyword id="KW-0143">Chaperone</keyword>
<keyword id="KW-0963">Cytoplasm</keyword>
<keyword id="KW-0547">Nucleotide-binding</keyword>
<keyword id="KW-1185">Reference proteome</keyword>
<protein>
    <recommendedName>
        <fullName evidence="1">ATP-dependent protease ATPase subunit HslU</fullName>
    </recommendedName>
    <alternativeName>
        <fullName evidence="1">Unfoldase HslU</fullName>
    </alternativeName>
</protein>
<evidence type="ECO:0000255" key="1">
    <source>
        <dbReference type="HAMAP-Rule" id="MF_00249"/>
    </source>
</evidence>
<evidence type="ECO:0000305" key="2"/>
<accession>Q8D2S7</accession>